<sequence length="458" mass="49756">MNTSYSQSTLRHNQVLIWLCVLSFFSVLNEMVLNVSLPDIANEFNKLPASANWVNTAFMLTFSIGTALYGKLSDQLGIKNLLLFGIMVNGLGSIIGFVGHSFFPILILARFIQGIGAAAFPALVMVVVARYIPKENRGKAFGLIGSLVAMGEGVGPAIGGMVAHYIHWSYLLLIPTATIITVPFLIKLLKKEERIRGHIDMAGIILMSAGIVFFMLFTTSYRFSFLIISILAFFIFVQHIRKAQDPFVDPELGKNVFFVIGTLCGGLIFGTVAGFVSMVPYMMKDVHHLSTAAIGSGIIFPGTMSVIIFGYIGGLLVDRKGSLYVLTIGSALLSSGFLIAAFFIDAAPWIMTIIVIFVFGGLSFTKTVISTVVSSSLKEKEAGAGMSLLNFTSFLSEGTGIAIVGGLLSIGFLDHRLLPIDVDHSTYLYSNMLILFAGIIVICWLVILNVYKRSRRHG</sequence>
<proteinExistence type="inferred from homology"/>
<comment type="function">
    <text>Resistance to tetracycline by an active tetracycline efflux. This is an energy-dependent process that decreases the accumulation of the antibiotic in whole cells. This protein functions as a metal-tetracycline/H(+) antiporter.</text>
</comment>
<comment type="subcellular location">
    <subcellularLocation>
        <location>Cell membrane</location>
        <topology>Multi-pass membrane protein</topology>
    </subcellularLocation>
</comment>
<comment type="similarity">
    <text evidence="2">Belongs to the major facilitator superfamily. TCR/Tet family.</text>
</comment>
<gene>
    <name type="primary">tetB</name>
    <name type="synonym">tet</name>
    <name type="ordered locus">BSU40770</name>
</gene>
<accession>P23054</accession>
<reference key="1">
    <citation type="journal article" date="1988" name="Biochim. Biophys. Acta">
        <title>Nucleotide sequence homology of the tetracycline-resistance determinant naturally maintained in Bacillus subtilis Marburg 168 chromosome and the tetracycline-resistance gene of B. subtilis plasmid pNS1981.</title>
        <authorList>
            <person name="Sakaguchi R."/>
            <person name="Amano H."/>
            <person name="Shishido K."/>
        </authorList>
    </citation>
    <scope>NUCLEOTIDE SEQUENCE [GENOMIC DNA]</scope>
    <source>
        <strain>168</strain>
    </source>
</reference>
<reference key="2">
    <citation type="journal article" date="1994" name="DNA Res.">
        <title>Systematic sequencing of the 180 kilobase region of the Bacillus subtilis chromosome containing the replication origin.</title>
        <authorList>
            <person name="Ogasawara N."/>
            <person name="Nakai S."/>
            <person name="Yoshikawa H."/>
        </authorList>
    </citation>
    <scope>NUCLEOTIDE SEQUENCE [GENOMIC DNA]</scope>
    <source>
        <strain>168</strain>
    </source>
</reference>
<reference key="3">
    <citation type="journal article" date="1997" name="Nature">
        <title>The complete genome sequence of the Gram-positive bacterium Bacillus subtilis.</title>
        <authorList>
            <person name="Kunst F."/>
            <person name="Ogasawara N."/>
            <person name="Moszer I."/>
            <person name="Albertini A.M."/>
            <person name="Alloni G."/>
            <person name="Azevedo V."/>
            <person name="Bertero M.G."/>
            <person name="Bessieres P."/>
            <person name="Bolotin A."/>
            <person name="Borchert S."/>
            <person name="Borriss R."/>
            <person name="Boursier L."/>
            <person name="Brans A."/>
            <person name="Braun M."/>
            <person name="Brignell S.C."/>
            <person name="Bron S."/>
            <person name="Brouillet S."/>
            <person name="Bruschi C.V."/>
            <person name="Caldwell B."/>
            <person name="Capuano V."/>
            <person name="Carter N.M."/>
            <person name="Choi S.-K."/>
            <person name="Codani J.-J."/>
            <person name="Connerton I.F."/>
            <person name="Cummings N.J."/>
            <person name="Daniel R.A."/>
            <person name="Denizot F."/>
            <person name="Devine K.M."/>
            <person name="Duesterhoeft A."/>
            <person name="Ehrlich S.D."/>
            <person name="Emmerson P.T."/>
            <person name="Entian K.-D."/>
            <person name="Errington J."/>
            <person name="Fabret C."/>
            <person name="Ferrari E."/>
            <person name="Foulger D."/>
            <person name="Fritz C."/>
            <person name="Fujita M."/>
            <person name="Fujita Y."/>
            <person name="Fuma S."/>
            <person name="Galizzi A."/>
            <person name="Galleron N."/>
            <person name="Ghim S.-Y."/>
            <person name="Glaser P."/>
            <person name="Goffeau A."/>
            <person name="Golightly E.J."/>
            <person name="Grandi G."/>
            <person name="Guiseppi G."/>
            <person name="Guy B.J."/>
            <person name="Haga K."/>
            <person name="Haiech J."/>
            <person name="Harwood C.R."/>
            <person name="Henaut A."/>
            <person name="Hilbert H."/>
            <person name="Holsappel S."/>
            <person name="Hosono S."/>
            <person name="Hullo M.-F."/>
            <person name="Itaya M."/>
            <person name="Jones L.-M."/>
            <person name="Joris B."/>
            <person name="Karamata D."/>
            <person name="Kasahara Y."/>
            <person name="Klaerr-Blanchard M."/>
            <person name="Klein C."/>
            <person name="Kobayashi Y."/>
            <person name="Koetter P."/>
            <person name="Koningstein G."/>
            <person name="Krogh S."/>
            <person name="Kumano M."/>
            <person name="Kurita K."/>
            <person name="Lapidus A."/>
            <person name="Lardinois S."/>
            <person name="Lauber J."/>
            <person name="Lazarevic V."/>
            <person name="Lee S.-M."/>
            <person name="Levine A."/>
            <person name="Liu H."/>
            <person name="Masuda S."/>
            <person name="Mauel C."/>
            <person name="Medigue C."/>
            <person name="Medina N."/>
            <person name="Mellado R.P."/>
            <person name="Mizuno M."/>
            <person name="Moestl D."/>
            <person name="Nakai S."/>
            <person name="Noback M."/>
            <person name="Noone D."/>
            <person name="O'Reilly M."/>
            <person name="Ogawa K."/>
            <person name="Ogiwara A."/>
            <person name="Oudega B."/>
            <person name="Park S.-H."/>
            <person name="Parro V."/>
            <person name="Pohl T.M."/>
            <person name="Portetelle D."/>
            <person name="Porwollik S."/>
            <person name="Prescott A.M."/>
            <person name="Presecan E."/>
            <person name="Pujic P."/>
            <person name="Purnelle B."/>
            <person name="Rapoport G."/>
            <person name="Rey M."/>
            <person name="Reynolds S."/>
            <person name="Rieger M."/>
            <person name="Rivolta C."/>
            <person name="Rocha E."/>
            <person name="Roche B."/>
            <person name="Rose M."/>
            <person name="Sadaie Y."/>
            <person name="Sato T."/>
            <person name="Scanlan E."/>
            <person name="Schleich S."/>
            <person name="Schroeter R."/>
            <person name="Scoffone F."/>
            <person name="Sekiguchi J."/>
            <person name="Sekowska A."/>
            <person name="Seror S.J."/>
            <person name="Serror P."/>
            <person name="Shin B.-S."/>
            <person name="Soldo B."/>
            <person name="Sorokin A."/>
            <person name="Tacconi E."/>
            <person name="Takagi T."/>
            <person name="Takahashi H."/>
            <person name="Takemaru K."/>
            <person name="Takeuchi M."/>
            <person name="Tamakoshi A."/>
            <person name="Tanaka T."/>
            <person name="Terpstra P."/>
            <person name="Tognoni A."/>
            <person name="Tosato V."/>
            <person name="Uchiyama S."/>
            <person name="Vandenbol M."/>
            <person name="Vannier F."/>
            <person name="Vassarotti A."/>
            <person name="Viari A."/>
            <person name="Wambutt R."/>
            <person name="Wedler E."/>
            <person name="Wedler H."/>
            <person name="Weitzenegger T."/>
            <person name="Winters P."/>
            <person name="Wipat A."/>
            <person name="Yamamoto H."/>
            <person name="Yamane K."/>
            <person name="Yasumoto K."/>
            <person name="Yata K."/>
            <person name="Yoshida K."/>
            <person name="Yoshikawa H.-F."/>
            <person name="Zumstein E."/>
            <person name="Yoshikawa H."/>
            <person name="Danchin A."/>
        </authorList>
    </citation>
    <scope>NUCLEOTIDE SEQUENCE [LARGE SCALE GENOMIC DNA]</scope>
    <source>
        <strain>168</strain>
    </source>
</reference>
<dbReference type="EMBL" id="X08034">
    <property type="protein sequence ID" value="CAA30827.1"/>
    <property type="molecule type" value="Genomic_DNA"/>
</dbReference>
<dbReference type="EMBL" id="D26185">
    <property type="protein sequence ID" value="BAA05208.1"/>
    <property type="molecule type" value="Genomic_DNA"/>
</dbReference>
<dbReference type="EMBL" id="AL009126">
    <property type="protein sequence ID" value="CAB16114.1"/>
    <property type="molecule type" value="Genomic_DNA"/>
</dbReference>
<dbReference type="PIR" id="JT0427">
    <property type="entry name" value="YTBSY8"/>
</dbReference>
<dbReference type="RefSeq" id="NP_391957.1">
    <property type="nucleotide sequence ID" value="NC_000964.3"/>
</dbReference>
<dbReference type="SMR" id="P23054"/>
<dbReference type="FunCoup" id="P23054">
    <property type="interactions" value="83"/>
</dbReference>
<dbReference type="STRING" id="224308.BSU40770"/>
<dbReference type="TCDB" id="2.A.1.3.16">
    <property type="family name" value="the major facilitator superfamily (mfs)"/>
</dbReference>
<dbReference type="PaxDb" id="224308-BSU40770"/>
<dbReference type="EnsemblBacteria" id="CAB16114">
    <property type="protein sequence ID" value="CAB16114"/>
    <property type="gene ID" value="BSU_40770"/>
</dbReference>
<dbReference type="GeneID" id="937890"/>
<dbReference type="KEGG" id="ag:CAA30827"/>
<dbReference type="KEGG" id="bsu:BSU40770"/>
<dbReference type="PATRIC" id="fig|224308.179.peg.4419"/>
<dbReference type="eggNOG" id="COG2814">
    <property type="taxonomic scope" value="Bacteria"/>
</dbReference>
<dbReference type="InParanoid" id="P23054"/>
<dbReference type="OrthoDB" id="2403626at2"/>
<dbReference type="PhylomeDB" id="P23054"/>
<dbReference type="BioCyc" id="BSUB:BSU40770-MONOMER"/>
<dbReference type="Proteomes" id="UP000001570">
    <property type="component" value="Chromosome"/>
</dbReference>
<dbReference type="GO" id="GO:0005886">
    <property type="term" value="C:plasma membrane"/>
    <property type="evidence" value="ECO:0000318"/>
    <property type="project" value="GO_Central"/>
</dbReference>
<dbReference type="GO" id="GO:0015297">
    <property type="term" value="F:antiporter activity"/>
    <property type="evidence" value="ECO:0007669"/>
    <property type="project" value="UniProtKB-KW"/>
</dbReference>
<dbReference type="GO" id="GO:0022857">
    <property type="term" value="F:transmembrane transporter activity"/>
    <property type="evidence" value="ECO:0000318"/>
    <property type="project" value="GO_Central"/>
</dbReference>
<dbReference type="GO" id="GO:1902600">
    <property type="term" value="P:proton transmembrane transport"/>
    <property type="evidence" value="ECO:0007669"/>
    <property type="project" value="UniProtKB-KW"/>
</dbReference>
<dbReference type="GO" id="GO:0046677">
    <property type="term" value="P:response to antibiotic"/>
    <property type="evidence" value="ECO:0007669"/>
    <property type="project" value="UniProtKB-KW"/>
</dbReference>
<dbReference type="GO" id="GO:0055085">
    <property type="term" value="P:transmembrane transport"/>
    <property type="evidence" value="ECO:0000318"/>
    <property type="project" value="GO_Central"/>
</dbReference>
<dbReference type="CDD" id="cd17321">
    <property type="entry name" value="MFS_MMR_MDR_like"/>
    <property type="match status" value="1"/>
</dbReference>
<dbReference type="Gene3D" id="1.20.1250.20">
    <property type="entry name" value="MFS general substrate transporter like domains"/>
    <property type="match status" value="1"/>
</dbReference>
<dbReference type="Gene3D" id="1.20.1720.10">
    <property type="entry name" value="Multidrug resistance protein D"/>
    <property type="match status" value="1"/>
</dbReference>
<dbReference type="InterPro" id="IPR011701">
    <property type="entry name" value="MFS"/>
</dbReference>
<dbReference type="InterPro" id="IPR020846">
    <property type="entry name" value="MFS_dom"/>
</dbReference>
<dbReference type="InterPro" id="IPR036259">
    <property type="entry name" value="MFS_trans_sf"/>
</dbReference>
<dbReference type="NCBIfam" id="NF012185">
    <property type="entry name" value="tet_MFS_L"/>
    <property type="match status" value="1"/>
</dbReference>
<dbReference type="NCBIfam" id="NF012175">
    <property type="entry name" value="tet_MFS_L_K_45"/>
    <property type="match status" value="1"/>
</dbReference>
<dbReference type="PANTHER" id="PTHR23501">
    <property type="entry name" value="MAJOR FACILITATOR SUPERFAMILY"/>
    <property type="match status" value="1"/>
</dbReference>
<dbReference type="PANTHER" id="PTHR23501:SF188">
    <property type="entry name" value="TETRACYCLINE RESISTANCE PROTEIN"/>
    <property type="match status" value="1"/>
</dbReference>
<dbReference type="Pfam" id="PF07690">
    <property type="entry name" value="MFS_1"/>
    <property type="match status" value="1"/>
</dbReference>
<dbReference type="PRINTS" id="PR01036">
    <property type="entry name" value="TCRTETB"/>
</dbReference>
<dbReference type="SUPFAM" id="SSF103473">
    <property type="entry name" value="MFS general substrate transporter"/>
    <property type="match status" value="1"/>
</dbReference>
<dbReference type="PROSITE" id="PS50850">
    <property type="entry name" value="MFS"/>
    <property type="match status" value="1"/>
</dbReference>
<name>TCRB_BACSU</name>
<organism>
    <name type="scientific">Bacillus subtilis (strain 168)</name>
    <dbReference type="NCBI Taxonomy" id="224308"/>
    <lineage>
        <taxon>Bacteria</taxon>
        <taxon>Bacillati</taxon>
        <taxon>Bacillota</taxon>
        <taxon>Bacilli</taxon>
        <taxon>Bacillales</taxon>
        <taxon>Bacillaceae</taxon>
        <taxon>Bacillus</taxon>
    </lineage>
</organism>
<evidence type="ECO:0000255" key="1"/>
<evidence type="ECO:0000305" key="2"/>
<protein>
    <recommendedName>
        <fullName>Tetracycline resistance protein</fullName>
    </recommendedName>
</protein>
<feature type="chain" id="PRO_0000173383" description="Tetracycline resistance protein">
    <location>
        <begin position="1"/>
        <end position="458"/>
    </location>
</feature>
<feature type="transmembrane region" description="Helical" evidence="1">
    <location>
        <begin position="12"/>
        <end position="33"/>
    </location>
</feature>
<feature type="transmembrane region" description="Helical" evidence="1">
    <location>
        <begin position="81"/>
        <end position="100"/>
    </location>
</feature>
<feature type="transmembrane region" description="Helical" evidence="1">
    <location>
        <begin position="111"/>
        <end position="129"/>
    </location>
</feature>
<feature type="transmembrane region" description="Helical" evidence="1">
    <location>
        <begin position="140"/>
        <end position="162"/>
    </location>
</feature>
<feature type="transmembrane region" description="Helical" evidence="1">
    <location>
        <begin position="165"/>
        <end position="185"/>
    </location>
</feature>
<feature type="transmembrane region" description="Helical" evidence="1">
    <location>
        <begin position="201"/>
        <end position="221"/>
    </location>
</feature>
<feature type="transmembrane region" description="Helical" evidence="1">
    <location>
        <begin position="223"/>
        <end position="240"/>
    </location>
</feature>
<feature type="transmembrane region" description="Helical" evidence="1">
    <location>
        <begin position="256"/>
        <end position="276"/>
    </location>
</feature>
<feature type="transmembrane region" description="Helical" evidence="1">
    <location>
        <begin position="297"/>
        <end position="317"/>
    </location>
</feature>
<feature type="transmembrane region" description="Helical" evidence="1">
    <location>
        <begin position="324"/>
        <end position="344"/>
    </location>
</feature>
<feature type="transmembrane region" description="Helical" evidence="1">
    <location>
        <begin position="346"/>
        <end position="365"/>
    </location>
</feature>
<feature type="transmembrane region" description="Helical" evidence="1">
    <location>
        <begin position="432"/>
        <end position="451"/>
    </location>
</feature>
<keyword id="KW-0046">Antibiotic resistance</keyword>
<keyword id="KW-0050">Antiport</keyword>
<keyword id="KW-1003">Cell membrane</keyword>
<keyword id="KW-0375">Hydrogen ion transport</keyword>
<keyword id="KW-0406">Ion transport</keyword>
<keyword id="KW-0472">Membrane</keyword>
<keyword id="KW-1185">Reference proteome</keyword>
<keyword id="KW-0812">Transmembrane</keyword>
<keyword id="KW-1133">Transmembrane helix</keyword>
<keyword id="KW-0813">Transport</keyword>